<name>SHRM4_HUMAN</name>
<protein>
    <recommendedName>
        <fullName>Protein Shroom4</fullName>
    </recommendedName>
    <alternativeName>
        <fullName>Second homolog of apical protein</fullName>
    </alternativeName>
</protein>
<organism>
    <name type="scientific">Homo sapiens</name>
    <name type="common">Human</name>
    <dbReference type="NCBI Taxonomy" id="9606"/>
    <lineage>
        <taxon>Eukaryota</taxon>
        <taxon>Metazoa</taxon>
        <taxon>Chordata</taxon>
        <taxon>Craniata</taxon>
        <taxon>Vertebrata</taxon>
        <taxon>Euteleostomi</taxon>
        <taxon>Mammalia</taxon>
        <taxon>Eutheria</taxon>
        <taxon>Euarchontoglires</taxon>
        <taxon>Primates</taxon>
        <taxon>Haplorrhini</taxon>
        <taxon>Catarrhini</taxon>
        <taxon>Hominidae</taxon>
        <taxon>Homo</taxon>
    </lineage>
</organism>
<feature type="chain" id="PRO_0000287077" description="Protein Shroom4">
    <location>
        <begin position="1"/>
        <end position="1493"/>
    </location>
</feature>
<feature type="domain" description="PDZ" evidence="4">
    <location>
        <begin position="10"/>
        <end position="92"/>
    </location>
</feature>
<feature type="domain" description="ASD2" evidence="5">
    <location>
        <begin position="1213"/>
        <end position="1492"/>
    </location>
</feature>
<feature type="region of interest" description="Disordered" evidence="6">
    <location>
        <begin position="202"/>
        <end position="282"/>
    </location>
</feature>
<feature type="region of interest" description="Disordered" evidence="6">
    <location>
        <begin position="430"/>
        <end position="695"/>
    </location>
</feature>
<feature type="region of interest" description="Disordered" evidence="6">
    <location>
        <begin position="740"/>
        <end position="759"/>
    </location>
</feature>
<feature type="region of interest" description="Disordered" evidence="6">
    <location>
        <begin position="781"/>
        <end position="813"/>
    </location>
</feature>
<feature type="region of interest" description="Disordered" evidence="6">
    <location>
        <begin position="1117"/>
        <end position="1170"/>
    </location>
</feature>
<feature type="region of interest" description="Disordered" evidence="6">
    <location>
        <begin position="1187"/>
        <end position="1206"/>
    </location>
</feature>
<feature type="region of interest" description="Disordered" evidence="6">
    <location>
        <begin position="1214"/>
        <end position="1236"/>
    </location>
</feature>
<feature type="region of interest" description="Disordered" evidence="6">
    <location>
        <begin position="1246"/>
        <end position="1265"/>
    </location>
</feature>
<feature type="coiled-coil region" evidence="3">
    <location>
        <begin position="1382"/>
        <end position="1488"/>
    </location>
</feature>
<feature type="compositionally biased region" description="Polar residues" evidence="6">
    <location>
        <begin position="234"/>
        <end position="243"/>
    </location>
</feature>
<feature type="compositionally biased region" description="Polar residues" evidence="6">
    <location>
        <begin position="249"/>
        <end position="262"/>
    </location>
</feature>
<feature type="compositionally biased region" description="Basic and acidic residues" evidence="6">
    <location>
        <begin position="470"/>
        <end position="484"/>
    </location>
</feature>
<feature type="compositionally biased region" description="Basic and acidic residues" evidence="6">
    <location>
        <begin position="498"/>
        <end position="509"/>
    </location>
</feature>
<feature type="compositionally biased region" description="Polar residues" evidence="6">
    <location>
        <begin position="513"/>
        <end position="547"/>
    </location>
</feature>
<feature type="compositionally biased region" description="Polar residues" evidence="6">
    <location>
        <begin position="782"/>
        <end position="802"/>
    </location>
</feature>
<feature type="compositionally biased region" description="Low complexity" evidence="6">
    <location>
        <begin position="1118"/>
        <end position="1129"/>
    </location>
</feature>
<feature type="compositionally biased region" description="Acidic residues" evidence="6">
    <location>
        <begin position="1132"/>
        <end position="1159"/>
    </location>
</feature>
<feature type="modified residue" description="Phosphoserine" evidence="2">
    <location>
        <position position="411"/>
    </location>
</feature>
<feature type="modified residue" description="Phosphoserine" evidence="2">
    <location>
        <position position="729"/>
    </location>
</feature>
<feature type="modified residue" description="Phosphoserine" evidence="2">
    <location>
        <position position="1019"/>
    </location>
</feature>
<feature type="splice variant" id="VSP_025290" description="In isoform 2." evidence="12">
    <location>
        <begin position="1"/>
        <end position="116"/>
    </location>
</feature>
<feature type="sequence variant" id="VAR_079036" description="Found in a patient with Rett syndrome-like phenotype; uncertain significance; dbSNP:rs189694750." evidence="11">
    <original>R</original>
    <variation>W</variation>
    <location>
        <position position="146"/>
    </location>
</feature>
<feature type="sequence variant" id="VAR_075207" description="In dbSNP:rs150861758." evidence="10">
    <original>P</original>
    <variation>S</variation>
    <location>
        <position position="627"/>
    </location>
</feature>
<feature type="sequence variant" id="VAR_057770" description="In dbSNP:rs3761506.">
    <original>R</original>
    <variation>H</variation>
    <location>
        <position position="722"/>
    </location>
</feature>
<feature type="sequence variant" id="VAR_057771" description="In dbSNP:rs3761505.">
    <original>I</original>
    <variation>T</variation>
    <location>
        <position position="807"/>
    </location>
</feature>
<feature type="sequence variant" id="VAR_032257" description="In dbSNP:rs2281571.">
    <original>D</original>
    <variation>G</variation>
    <location>
        <position position="970"/>
    </location>
</feature>
<feature type="sequence variant" id="VAR_032258" description="Found in a family with Stocco dos Santos-type X-linked syndromic intellectual developmental disorder; uncertain significance; dbSNP:rs121434620." evidence="7">
    <original>S</original>
    <variation>L</variation>
    <location>
        <position position="1089"/>
    </location>
</feature>
<feature type="sequence variant" id="VAR_074639" description="In dbSNP:rs28362302." evidence="9">
    <original>L</original>
    <variation>F</variation>
    <location>
        <position position="1367"/>
    </location>
</feature>
<feature type="sequence conflict" description="In Ref. 1; BAA86516 and 3; AAI51241." evidence="13" ref="1 3">
    <original>KQQ</original>
    <variation>QQQQKQQE</variation>
    <location>
        <begin position="1129"/>
        <end position="1131"/>
    </location>
</feature>
<feature type="strand" evidence="14">
    <location>
        <begin position="9"/>
        <end position="14"/>
    </location>
</feature>
<feature type="strand" evidence="14">
    <location>
        <begin position="25"/>
        <end position="28"/>
    </location>
</feature>
<feature type="helix" evidence="14">
    <location>
        <begin position="29"/>
        <end position="31"/>
    </location>
</feature>
<feature type="strand" evidence="14">
    <location>
        <begin position="33"/>
        <end position="37"/>
    </location>
</feature>
<feature type="helix" evidence="14">
    <location>
        <begin position="45"/>
        <end position="49"/>
    </location>
</feature>
<feature type="strand" evidence="14">
    <location>
        <begin position="57"/>
        <end position="61"/>
    </location>
</feature>
<feature type="helix" evidence="14">
    <location>
        <begin position="71"/>
        <end position="78"/>
    </location>
</feature>
<feature type="strand" evidence="14">
    <location>
        <begin position="85"/>
        <end position="90"/>
    </location>
</feature>
<evidence type="ECO:0000250" key="1"/>
<evidence type="ECO:0000250" key="2">
    <source>
        <dbReference type="UniProtKB" id="Q1W617"/>
    </source>
</evidence>
<evidence type="ECO:0000255" key="3"/>
<evidence type="ECO:0000255" key="4">
    <source>
        <dbReference type="PROSITE-ProRule" id="PRU00143"/>
    </source>
</evidence>
<evidence type="ECO:0000255" key="5">
    <source>
        <dbReference type="PROSITE-ProRule" id="PRU00638"/>
    </source>
</evidence>
<evidence type="ECO:0000256" key="6">
    <source>
        <dbReference type="SAM" id="MobiDB-lite"/>
    </source>
</evidence>
<evidence type="ECO:0000269" key="7">
    <source>
    </source>
</evidence>
<evidence type="ECO:0000269" key="8">
    <source>
    </source>
</evidence>
<evidence type="ECO:0000269" key="9">
    <source>
    </source>
</evidence>
<evidence type="ECO:0000269" key="10">
    <source>
    </source>
</evidence>
<evidence type="ECO:0000269" key="11">
    <source>
    </source>
</evidence>
<evidence type="ECO:0000303" key="12">
    <source ref="4"/>
</evidence>
<evidence type="ECO:0000305" key="13"/>
<evidence type="ECO:0007829" key="14">
    <source>
        <dbReference type="PDB" id="2EDP"/>
    </source>
</evidence>
<sequence>MENRPGSFQYVPVQLQGGAPWGFTLKGGLEHCEPLTVSKIEDGGKAALSQKMRTGDELVNINGTPLYGSRQEALILIKGSFRILKLIVRRRNAPVSRPHSWHVAKLLEGCPEAATTMHFPSEAFSLSWHSGCNTSDVCVQWCPLSRHCSTEKSSSIGSMESLEQPGQATYESHLLPIDQNMYPNQRDSAYSSFSASSNASDCALSLRPEEPASTDCIMQGPGPTKAPSGRPNVAETSGGSRRTNGGHLTPSSQMSSRPQEGYQSGPAKAVRGPPQPPVRRDSLQASRAQLLNGEQRRASEPVVPLPQKEKLSLEPVLPARNPNRFCCLSGHDQVTSEGHQNCEFSQPPESSQQGSEHLLMQASTKAVGSPKACDRASSVDSNPLNEASAELAKASFGRPPHLIGPTGHRHSAPEQLLASHLQHVHLDTRGSKGMELPPVQDGHQWTLSPLHSSHKGKKSPCPPTGGTHDQSSKERKTRQVDDRSLVLGHQSQSSPPHGEADGHPSEKGFLDPNRTSRAASELANQQPSASGSLVQQATDCSSTTKAASGTEAGEEGDSEPKECSRMGGRRSGGTRGRSIQNRRKSERFATNLRNEIQRRKAQLQKSKGPLSQLCDTKEPVEETQEPPESPPLTASNTSLLSSCKKPPSPRDKLFNKSMMLRARSSECLSQAPESHESRTGLEGRISPGQRPGQSSLGLNTWWKAPDPSSSDPEKAHAHCGVRGGHWRWSPEHNSQPLVAAAMEGPSNPGDNKELKASTAQAGEDAILLPFADRRKFFEESSKSLSTSHLPGLTTHSNKTFTQRPKPIDQNFQPMSSSCRELRRHPMDQSYHSADQPYHATDQSYHSMSPLQSETPTYSECFASKGLENSMCCKPLHCGDFDYHRTCSYSCSVQGALVHDPCIYCSGEICPALLKRNMMPNCYNCRCHHHQCIRCSVCYHNPQHSALEDSSLAPGNTWKPRKLTVQEFPGDKWNPITGNRKTSQSGREMAHSKTSFSWATPFHPCLENPALDLSSYRAISSLDLLGDFKHALKKSEETSVYEEGSSLASMPHPLRSRAFSESHISLAPQSTRAWGQHRRELFSKGDETQSDLLGARKKAFPPPRPPPPNWEKYRLFRAAQQQKQQQQQQKQQEEEEEEEEEEEEEEEEEEEEAEEEEEELPPQYFSSETSGSCALNPEEVLEQPQPLSFGHLEGSRQGSQSVPAEQESFALHSSDFLPPIRGHLGSQPEQAQPPCYYGIGGLWRTSGQEATESAKQEFQHFSPPSGAPGIPTSYSAYYNISVAKAELLNKLKDQPEMAEIGLGEEEVDHELAQKKIQLIESISRKLSVLREAQRGLLEDINANSALGEEVEANLKAVCKSNEFEKYHLFVGDLDKVVNLLLSLSGRLARVENALNSIDSEANQEKLVLIEKKQQLTGQLADAKELKEHVDRREKLVFGMVSRYLPQDQLQDYQHFVKMKSALIIEQRELEEKIKLGEEQLKCLRESLLLGPSNF</sequence>
<gene>
    <name type="primary">SHROOM4</name>
    <name type="synonym">KIAA1202</name>
    <name type="synonym">SHAP</name>
</gene>
<accession>Q9ULL8</accession>
<accession>A7E2X9</accession>
<accession>D6RFW0</accession>
<accession>Q96LA0</accession>
<reference key="1">
    <citation type="journal article" date="1999" name="DNA Res.">
        <title>Prediction of the coding sequences of unidentified human genes. XV. The complete sequences of 100 new cDNA clones from brain which code for large proteins in vitro.</title>
        <authorList>
            <person name="Nagase T."/>
            <person name="Ishikawa K."/>
            <person name="Kikuno R."/>
            <person name="Hirosawa M."/>
            <person name="Nomura N."/>
            <person name="Ohara O."/>
        </authorList>
    </citation>
    <scope>NUCLEOTIDE SEQUENCE [LARGE SCALE MRNA] (ISOFORM 1)</scope>
    <source>
        <tissue>Brain</tissue>
    </source>
</reference>
<reference key="2">
    <citation type="journal article" date="2005" name="Nature">
        <title>The DNA sequence of the human X chromosome.</title>
        <authorList>
            <person name="Ross M.T."/>
            <person name="Grafham D.V."/>
            <person name="Coffey A.J."/>
            <person name="Scherer S."/>
            <person name="McLay K."/>
            <person name="Muzny D."/>
            <person name="Platzer M."/>
            <person name="Howell G.R."/>
            <person name="Burrows C."/>
            <person name="Bird C.P."/>
            <person name="Frankish A."/>
            <person name="Lovell F.L."/>
            <person name="Howe K.L."/>
            <person name="Ashurst J.L."/>
            <person name="Fulton R.S."/>
            <person name="Sudbrak R."/>
            <person name="Wen G."/>
            <person name="Jones M.C."/>
            <person name="Hurles M.E."/>
            <person name="Andrews T.D."/>
            <person name="Scott C.E."/>
            <person name="Searle S."/>
            <person name="Ramser J."/>
            <person name="Whittaker A."/>
            <person name="Deadman R."/>
            <person name="Carter N.P."/>
            <person name="Hunt S.E."/>
            <person name="Chen R."/>
            <person name="Cree A."/>
            <person name="Gunaratne P."/>
            <person name="Havlak P."/>
            <person name="Hodgson A."/>
            <person name="Metzker M.L."/>
            <person name="Richards S."/>
            <person name="Scott G."/>
            <person name="Steffen D."/>
            <person name="Sodergren E."/>
            <person name="Wheeler D.A."/>
            <person name="Worley K.C."/>
            <person name="Ainscough R."/>
            <person name="Ambrose K.D."/>
            <person name="Ansari-Lari M.A."/>
            <person name="Aradhya S."/>
            <person name="Ashwell R.I."/>
            <person name="Babbage A.K."/>
            <person name="Bagguley C.L."/>
            <person name="Ballabio A."/>
            <person name="Banerjee R."/>
            <person name="Barker G.E."/>
            <person name="Barlow K.F."/>
            <person name="Barrett I.P."/>
            <person name="Bates K.N."/>
            <person name="Beare D.M."/>
            <person name="Beasley H."/>
            <person name="Beasley O."/>
            <person name="Beck A."/>
            <person name="Bethel G."/>
            <person name="Blechschmidt K."/>
            <person name="Brady N."/>
            <person name="Bray-Allen S."/>
            <person name="Bridgeman A.M."/>
            <person name="Brown A.J."/>
            <person name="Brown M.J."/>
            <person name="Bonnin D."/>
            <person name="Bruford E.A."/>
            <person name="Buhay C."/>
            <person name="Burch P."/>
            <person name="Burford D."/>
            <person name="Burgess J."/>
            <person name="Burrill W."/>
            <person name="Burton J."/>
            <person name="Bye J.M."/>
            <person name="Carder C."/>
            <person name="Carrel L."/>
            <person name="Chako J."/>
            <person name="Chapman J.C."/>
            <person name="Chavez D."/>
            <person name="Chen E."/>
            <person name="Chen G."/>
            <person name="Chen Y."/>
            <person name="Chen Z."/>
            <person name="Chinault C."/>
            <person name="Ciccodicola A."/>
            <person name="Clark S.Y."/>
            <person name="Clarke G."/>
            <person name="Clee C.M."/>
            <person name="Clegg S."/>
            <person name="Clerc-Blankenburg K."/>
            <person name="Clifford K."/>
            <person name="Cobley V."/>
            <person name="Cole C.G."/>
            <person name="Conquer J.S."/>
            <person name="Corby N."/>
            <person name="Connor R.E."/>
            <person name="David R."/>
            <person name="Davies J."/>
            <person name="Davis C."/>
            <person name="Davis J."/>
            <person name="Delgado O."/>
            <person name="Deshazo D."/>
            <person name="Dhami P."/>
            <person name="Ding Y."/>
            <person name="Dinh H."/>
            <person name="Dodsworth S."/>
            <person name="Draper H."/>
            <person name="Dugan-Rocha S."/>
            <person name="Dunham A."/>
            <person name="Dunn M."/>
            <person name="Durbin K.J."/>
            <person name="Dutta I."/>
            <person name="Eades T."/>
            <person name="Ellwood M."/>
            <person name="Emery-Cohen A."/>
            <person name="Errington H."/>
            <person name="Evans K.L."/>
            <person name="Faulkner L."/>
            <person name="Francis F."/>
            <person name="Frankland J."/>
            <person name="Fraser A.E."/>
            <person name="Galgoczy P."/>
            <person name="Gilbert J."/>
            <person name="Gill R."/>
            <person name="Gloeckner G."/>
            <person name="Gregory S.G."/>
            <person name="Gribble S."/>
            <person name="Griffiths C."/>
            <person name="Grocock R."/>
            <person name="Gu Y."/>
            <person name="Gwilliam R."/>
            <person name="Hamilton C."/>
            <person name="Hart E.A."/>
            <person name="Hawes A."/>
            <person name="Heath P.D."/>
            <person name="Heitmann K."/>
            <person name="Hennig S."/>
            <person name="Hernandez J."/>
            <person name="Hinzmann B."/>
            <person name="Ho S."/>
            <person name="Hoffs M."/>
            <person name="Howden P.J."/>
            <person name="Huckle E.J."/>
            <person name="Hume J."/>
            <person name="Hunt P.J."/>
            <person name="Hunt A.R."/>
            <person name="Isherwood J."/>
            <person name="Jacob L."/>
            <person name="Johnson D."/>
            <person name="Jones S."/>
            <person name="de Jong P.J."/>
            <person name="Joseph S.S."/>
            <person name="Keenan S."/>
            <person name="Kelly S."/>
            <person name="Kershaw J.K."/>
            <person name="Khan Z."/>
            <person name="Kioschis P."/>
            <person name="Klages S."/>
            <person name="Knights A.J."/>
            <person name="Kosiura A."/>
            <person name="Kovar-Smith C."/>
            <person name="Laird G.K."/>
            <person name="Langford C."/>
            <person name="Lawlor S."/>
            <person name="Leversha M."/>
            <person name="Lewis L."/>
            <person name="Liu W."/>
            <person name="Lloyd C."/>
            <person name="Lloyd D.M."/>
            <person name="Loulseged H."/>
            <person name="Loveland J.E."/>
            <person name="Lovell J.D."/>
            <person name="Lozado R."/>
            <person name="Lu J."/>
            <person name="Lyne R."/>
            <person name="Ma J."/>
            <person name="Maheshwari M."/>
            <person name="Matthews L.H."/>
            <person name="McDowall J."/>
            <person name="McLaren S."/>
            <person name="McMurray A."/>
            <person name="Meidl P."/>
            <person name="Meitinger T."/>
            <person name="Milne S."/>
            <person name="Miner G."/>
            <person name="Mistry S.L."/>
            <person name="Morgan M."/>
            <person name="Morris S."/>
            <person name="Mueller I."/>
            <person name="Mullikin J.C."/>
            <person name="Nguyen N."/>
            <person name="Nordsiek G."/>
            <person name="Nyakatura G."/>
            <person name="O'dell C.N."/>
            <person name="Okwuonu G."/>
            <person name="Palmer S."/>
            <person name="Pandian R."/>
            <person name="Parker D."/>
            <person name="Parrish J."/>
            <person name="Pasternak S."/>
            <person name="Patel D."/>
            <person name="Pearce A.V."/>
            <person name="Pearson D.M."/>
            <person name="Pelan S.E."/>
            <person name="Perez L."/>
            <person name="Porter K.M."/>
            <person name="Ramsey Y."/>
            <person name="Reichwald K."/>
            <person name="Rhodes S."/>
            <person name="Ridler K.A."/>
            <person name="Schlessinger D."/>
            <person name="Schueler M.G."/>
            <person name="Sehra H.K."/>
            <person name="Shaw-Smith C."/>
            <person name="Shen H."/>
            <person name="Sheridan E.M."/>
            <person name="Shownkeen R."/>
            <person name="Skuce C.D."/>
            <person name="Smith M.L."/>
            <person name="Sotheran E.C."/>
            <person name="Steingruber H.E."/>
            <person name="Steward C.A."/>
            <person name="Storey R."/>
            <person name="Swann R.M."/>
            <person name="Swarbreck D."/>
            <person name="Tabor P.E."/>
            <person name="Taudien S."/>
            <person name="Taylor T."/>
            <person name="Teague B."/>
            <person name="Thomas K."/>
            <person name="Thorpe A."/>
            <person name="Timms K."/>
            <person name="Tracey A."/>
            <person name="Trevanion S."/>
            <person name="Tromans A.C."/>
            <person name="d'Urso M."/>
            <person name="Verduzco D."/>
            <person name="Villasana D."/>
            <person name="Waldron L."/>
            <person name="Wall M."/>
            <person name="Wang Q."/>
            <person name="Warren J."/>
            <person name="Warry G.L."/>
            <person name="Wei X."/>
            <person name="West A."/>
            <person name="Whitehead S.L."/>
            <person name="Whiteley M.N."/>
            <person name="Wilkinson J.E."/>
            <person name="Willey D.L."/>
            <person name="Williams G."/>
            <person name="Williams L."/>
            <person name="Williamson A."/>
            <person name="Williamson H."/>
            <person name="Wilming L."/>
            <person name="Woodmansey R.L."/>
            <person name="Wray P.W."/>
            <person name="Yen J."/>
            <person name="Zhang J."/>
            <person name="Zhou J."/>
            <person name="Zoghbi H."/>
            <person name="Zorilla S."/>
            <person name="Buck D."/>
            <person name="Reinhardt R."/>
            <person name="Poustka A."/>
            <person name="Rosenthal A."/>
            <person name="Lehrach H."/>
            <person name="Meindl A."/>
            <person name="Minx P.J."/>
            <person name="Hillier L.W."/>
            <person name="Willard H.F."/>
            <person name="Wilson R.K."/>
            <person name="Waterston R.H."/>
            <person name="Rice C.M."/>
            <person name="Vaudin M."/>
            <person name="Coulson A."/>
            <person name="Nelson D.L."/>
            <person name="Weinstock G."/>
            <person name="Sulston J.E."/>
            <person name="Durbin R.M."/>
            <person name="Hubbard T."/>
            <person name="Gibbs R.A."/>
            <person name="Beck S."/>
            <person name="Rogers J."/>
            <person name="Bentley D.R."/>
        </authorList>
    </citation>
    <scope>NUCLEOTIDE SEQUENCE [LARGE SCALE GENOMIC DNA]</scope>
</reference>
<reference key="3">
    <citation type="journal article" date="2004" name="Genome Res.">
        <title>The status, quality, and expansion of the NIH full-length cDNA project: the Mammalian Gene Collection (MGC).</title>
        <authorList>
            <consortium name="The MGC Project Team"/>
        </authorList>
    </citation>
    <scope>NUCLEOTIDE SEQUENCE [LARGE SCALE MRNA] (ISOFORM 1)</scope>
</reference>
<reference key="4">
    <citation type="submission" date="2001-05" db="EMBL/GenBank/DDBJ databases">
        <title>5'-sequence of TATA-box dependent expression forms of the human SHAP gene.</title>
        <authorList>
            <person name="Patzak D."/>
        </authorList>
    </citation>
    <scope>NUCLEOTIDE SEQUENCE [MRNA] OF 1-839 (ISOFORM 2)</scope>
    <source>
        <tissue>Heart</tissue>
    </source>
</reference>
<reference key="5">
    <citation type="journal article" date="2006" name="BMC Cell Biol.">
        <title>A new standard nomenclature for proteins related to Apx and Shroom.</title>
        <authorList>
            <person name="Hagens O."/>
            <person name="Ballabio A."/>
            <person name="Kalscheuer V."/>
            <person name="Kraehenbuhl J.-P."/>
            <person name="Schiaffino M.V."/>
            <person name="Smith P."/>
            <person name="Staub O."/>
            <person name="Hildebrand J.D."/>
            <person name="Wallingford J.B."/>
        </authorList>
    </citation>
    <scope>NOMENCLATURE</scope>
</reference>
<reference key="6">
    <citation type="journal article" date="2006" name="J. Biol. Chem.">
        <title>Differential actin-dependent localization modulates the evolutionarily conserved activity of Shroom family proteins.</title>
        <authorList>
            <person name="Dietz M.L."/>
            <person name="Bernaciak T.M."/>
            <person name="Vendetti F."/>
            <person name="Kielec J.M."/>
            <person name="Hildebrand J.D."/>
        </authorList>
    </citation>
    <scope>FUNCTION</scope>
    <scope>SUBCELLULAR LOCATION</scope>
</reference>
<reference key="7">
    <citation type="submission" date="2007-08" db="PDB data bank">
        <title>Solution structure of the PDZ domain from human Shroom family member 4.</title>
        <authorList>
            <consortium name="RIKEN structural genomics initiative (RSGI)"/>
        </authorList>
    </citation>
    <scope>STRUCTURE BY NMR OF 6-93</scope>
</reference>
<reference key="8">
    <citation type="journal article" date="2006" name="Hum. Genet.">
        <title>Disruptions of the novel KIAA1202 gene are associated with X-linked mental retardation.</title>
        <authorList>
            <person name="Hagens O."/>
            <person name="Dubos A."/>
            <person name="Abidi F."/>
            <person name="Barbi G."/>
            <person name="Van Zutven L."/>
            <person name="Hoeltzenbein M."/>
            <person name="Tommerup N."/>
            <person name="Moraine C."/>
            <person name="Fryns J.-P."/>
            <person name="Chelly J."/>
            <person name="van Bokhoven H."/>
            <person name="Gecz J."/>
            <person name="Dollfus H."/>
            <person name="Ropers H.-H."/>
            <person name="Schwartz C.E."/>
            <person name="de Cassia Stocco Dos Santos R."/>
            <person name="Kalscheuer V."/>
            <person name="Hanauer A."/>
        </authorList>
    </citation>
    <scope>VARIANT LEU-1089</scope>
    <scope>CHROMOSOMAL TRANSLOCATION WITH FBXO25</scope>
    <scope>SUBCELLULAR LOCATION</scope>
    <scope>TISSUE SPECIFICITY</scope>
</reference>
<reference key="9">
    <citation type="journal article" date="2014" name="Am. J. Med. Genet. A">
        <title>A novel EBP c.224T&gt;A mutation supports the existence of a male-specific disorder independent of CDPX2.</title>
        <authorList>
            <person name="Barboza-Cerda M.C."/>
            <person name="Wong L.J."/>
            <person name="Martinez-de-Villarreal L.E."/>
            <person name="Zhang V.W."/>
            <person name="Dector M.A."/>
        </authorList>
    </citation>
    <scope>VARIANT PHE-1367</scope>
</reference>
<reference key="10">
    <citation type="journal article" date="2015" name="Sci. Rep.">
        <title>NAA10 mutation causing a novel intellectual disability syndrome with Long QT due to N-terminal acetyltransferase impairment.</title>
        <authorList>
            <person name="Casey J.P."/>
            <person name="Stoeve S.I."/>
            <person name="McGorrian C."/>
            <person name="Galvin J."/>
            <person name="Blenski M."/>
            <person name="Dunne A."/>
            <person name="Ennis S."/>
            <person name="Brett F."/>
            <person name="King M.D."/>
            <person name="Arnesen T."/>
            <person name="Lynch S.A."/>
        </authorList>
    </citation>
    <scope>VARIANT SER-627</scope>
</reference>
<reference key="11">
    <citation type="journal article" date="2016" name="J. Med. Genet.">
        <title>Identification of novel genetic causes of Rett syndrome-like phenotypes.</title>
        <authorList>
            <person name="Lopes F."/>
            <person name="Barbosa M."/>
            <person name="Ameur A."/>
            <person name="Soares G."/>
            <person name="de Sa J."/>
            <person name="Dias A.I."/>
            <person name="Oliveira G."/>
            <person name="Cabral P."/>
            <person name="Temudo T."/>
            <person name="Calado E."/>
            <person name="Cruz I.F."/>
            <person name="Vieira J.P."/>
            <person name="Oliveira R."/>
            <person name="Esteves S."/>
            <person name="Sauer S."/>
            <person name="Jonasson I."/>
            <person name="Syvaenen A.C."/>
            <person name="Gyllensten U."/>
            <person name="Pinto D."/>
            <person name="Maciel P."/>
        </authorList>
    </citation>
    <scope>VARIANT TRP-146</scope>
</reference>
<comment type="function">
    <text evidence="1 8">Probable regulator of cytoskeletal architecture that plays an important role in development. May regulate cellular and cytoskeletal architecture by modulating the spatial distribution of myosin II (By similarity).</text>
</comment>
<comment type="subunit">
    <text evidence="1">Interacts directly with F-actin.</text>
</comment>
<comment type="subcellular location">
    <subcellularLocation>
        <location evidence="7 8">Cytoplasm</location>
        <location evidence="7 8">Cytoskeleton</location>
    </subcellularLocation>
    <text>Shows partial colocalization with the cytoplasmic pool of F-actin.</text>
</comment>
<comment type="alternative products">
    <event type="alternative splicing"/>
    <isoform>
        <id>Q9ULL8-1</id>
        <name>1</name>
        <name>SHAP-B</name>
        <sequence type="displayed"/>
    </isoform>
    <isoform>
        <id>Q9ULL8-2</id>
        <name>2</name>
        <name>SHAP-A</name>
        <sequence type="described" ref="VSP_025290"/>
    </isoform>
</comment>
<comment type="tissue specificity">
    <text evidence="7">Expressed in all fetal and adult tissues investigated. Expressed in adult heart, brain, placenta, lung, liver, skeletal muscle, kidney and pancreas. In brain regions detected in cerebellum, cerebral cortex, medulla, spinal cord, occipital pole, frontal lobe, temporal lobe and putamen. The expression is strongest in the medulla and weakest in the cerebral cortex.</text>
</comment>
<comment type="disease">
    <text>A chromosomal aberration involving SHROOM4 is a cause of X-linked intellectual disability (XLID). Translocation t(X;8)(p11.22;p23.3) with FBXO25.</text>
</comment>
<comment type="disease">
    <text>A chromosomal aberration involving SHROOM4 is a cause of X-linked intellectual disability (XLID). Translocation t(X;19).</text>
</comment>
<comment type="similarity">
    <text evidence="13">Belongs to the shroom family.</text>
</comment>
<comment type="sequence caution" evidence="13">
    <conflict type="erroneous initiation">
        <sequence resource="EMBL-CDS" id="BAA86516"/>
    </conflict>
    <text>Extended N-terminus.</text>
</comment>
<proteinExistence type="evidence at protein level"/>
<keyword id="KW-0002">3D-structure</keyword>
<keyword id="KW-0009">Actin-binding</keyword>
<keyword id="KW-0025">Alternative splicing</keyword>
<keyword id="KW-0160">Chromosomal rearrangement</keyword>
<keyword id="KW-0175">Coiled coil</keyword>
<keyword id="KW-0963">Cytoplasm</keyword>
<keyword id="KW-0206">Cytoskeleton</keyword>
<keyword id="KW-0217">Developmental protein</keyword>
<keyword id="KW-0991">Intellectual disability</keyword>
<keyword id="KW-0597">Phosphoprotein</keyword>
<keyword id="KW-1267">Proteomics identification</keyword>
<keyword id="KW-1185">Reference proteome</keyword>
<dbReference type="EMBL" id="AB033028">
    <property type="protein sequence ID" value="BAA86516.1"/>
    <property type="status" value="ALT_INIT"/>
    <property type="molecule type" value="mRNA"/>
</dbReference>
<dbReference type="EMBL" id="AL121865">
    <property type="status" value="NOT_ANNOTATED_CDS"/>
    <property type="molecule type" value="Genomic_DNA"/>
</dbReference>
<dbReference type="EMBL" id="AL445491">
    <property type="status" value="NOT_ANNOTATED_CDS"/>
    <property type="molecule type" value="Genomic_DNA"/>
</dbReference>
<dbReference type="EMBL" id="AL359272">
    <property type="status" value="NOT_ANNOTATED_CDS"/>
    <property type="molecule type" value="Genomic_DNA"/>
</dbReference>
<dbReference type="EMBL" id="BC151240">
    <property type="protein sequence ID" value="AAI51241.1"/>
    <property type="molecule type" value="mRNA"/>
</dbReference>
<dbReference type="EMBL" id="AY044234">
    <property type="protein sequence ID" value="AAK95579.1"/>
    <property type="molecule type" value="mRNA"/>
</dbReference>
<dbReference type="CCDS" id="CCDS35277.1">
    <molecule id="Q9ULL8-1"/>
</dbReference>
<dbReference type="RefSeq" id="NP_065768.2">
    <molecule id="Q9ULL8-1"/>
    <property type="nucleotide sequence ID" value="NM_020717.5"/>
</dbReference>
<dbReference type="PDB" id="2EDP">
    <property type="method" value="NMR"/>
    <property type="chains" value="A=6-92"/>
</dbReference>
<dbReference type="PDBsum" id="2EDP"/>
<dbReference type="SMR" id="Q9ULL8"/>
<dbReference type="BioGRID" id="121547">
    <property type="interactions" value="4"/>
</dbReference>
<dbReference type="FunCoup" id="Q9ULL8">
    <property type="interactions" value="45"/>
</dbReference>
<dbReference type="IntAct" id="Q9ULL8">
    <property type="interactions" value="1"/>
</dbReference>
<dbReference type="STRING" id="9606.ENSP00000365188"/>
<dbReference type="GlyGen" id="Q9ULL8">
    <property type="glycosylation" value="2 sites, 1 O-linked glycan (1 site)"/>
</dbReference>
<dbReference type="iPTMnet" id="Q9ULL8"/>
<dbReference type="PhosphoSitePlus" id="Q9ULL8"/>
<dbReference type="BioMuta" id="SHROOM4"/>
<dbReference type="DMDM" id="313104187"/>
<dbReference type="jPOST" id="Q9ULL8"/>
<dbReference type="MassIVE" id="Q9ULL8"/>
<dbReference type="PaxDb" id="9606-ENSP00000365188"/>
<dbReference type="PeptideAtlas" id="Q9ULL8"/>
<dbReference type="ProteomicsDB" id="85073">
    <molecule id="Q9ULL8-1"/>
</dbReference>
<dbReference type="ProteomicsDB" id="85074">
    <molecule id="Q9ULL8-2"/>
</dbReference>
<dbReference type="Antibodypedia" id="532">
    <property type="antibodies" value="11 antibodies from 8 providers"/>
</dbReference>
<dbReference type="DNASU" id="57477"/>
<dbReference type="Ensembl" id="ENST00000289292.11">
    <molecule id="Q9ULL8-1"/>
    <property type="protein sequence ID" value="ENSP00000289292.7"/>
    <property type="gene ID" value="ENSG00000158352.18"/>
</dbReference>
<dbReference type="Ensembl" id="ENST00000376020.9">
    <molecule id="Q9ULL8-1"/>
    <property type="protein sequence ID" value="ENSP00000365188.2"/>
    <property type="gene ID" value="ENSG00000158352.18"/>
</dbReference>
<dbReference type="Ensembl" id="ENST00000460112.3">
    <molecule id="Q9ULL8-2"/>
    <property type="protein sequence ID" value="ENSP00000421450.1"/>
    <property type="gene ID" value="ENSG00000158352.18"/>
</dbReference>
<dbReference type="GeneID" id="57477"/>
<dbReference type="KEGG" id="hsa:57477"/>
<dbReference type="MANE-Select" id="ENST00000376020.9">
    <property type="protein sequence ID" value="ENSP00000365188.2"/>
    <property type="RefSeq nucleotide sequence ID" value="NM_020717.5"/>
    <property type="RefSeq protein sequence ID" value="NP_065768.2"/>
</dbReference>
<dbReference type="UCSC" id="uc004dpe.4">
    <molecule id="Q9ULL8-1"/>
    <property type="organism name" value="human"/>
</dbReference>
<dbReference type="AGR" id="HGNC:29215"/>
<dbReference type="CTD" id="57477"/>
<dbReference type="DisGeNET" id="57477"/>
<dbReference type="GeneCards" id="SHROOM4"/>
<dbReference type="HGNC" id="HGNC:29215">
    <property type="gene designation" value="SHROOM4"/>
</dbReference>
<dbReference type="HPA" id="ENSG00000158352">
    <property type="expression patterns" value="Low tissue specificity"/>
</dbReference>
<dbReference type="MalaCards" id="SHROOM4"/>
<dbReference type="MIM" id="300579">
    <property type="type" value="gene"/>
</dbReference>
<dbReference type="neXtProt" id="NX_Q9ULL8"/>
<dbReference type="OpenTargets" id="ENSG00000158352"/>
<dbReference type="Orphanet" id="85288">
    <property type="disease" value="X-linked intellectual disability, Stocco Dos Santos type"/>
</dbReference>
<dbReference type="PharmGKB" id="PA147357321"/>
<dbReference type="VEuPathDB" id="HostDB:ENSG00000158352"/>
<dbReference type="eggNOG" id="ENOG502QSTC">
    <property type="taxonomic scope" value="Eukaryota"/>
</dbReference>
<dbReference type="GeneTree" id="ENSGT00940000159479"/>
<dbReference type="HOGENOM" id="CLU_003220_1_1_1"/>
<dbReference type="InParanoid" id="Q9ULL8"/>
<dbReference type="OMA" id="LHCSDFD"/>
<dbReference type="OrthoDB" id="10063560at2759"/>
<dbReference type="PAN-GO" id="Q9ULL8">
    <property type="GO annotations" value="6 GO annotations based on evolutionary models"/>
</dbReference>
<dbReference type="PhylomeDB" id="Q9ULL8"/>
<dbReference type="TreeFam" id="TF333370"/>
<dbReference type="PathwayCommons" id="Q9ULL8"/>
<dbReference type="SignaLink" id="Q9ULL8"/>
<dbReference type="BioGRID-ORCS" id="57477">
    <property type="hits" value="9 hits in 773 CRISPR screens"/>
</dbReference>
<dbReference type="ChiTaRS" id="SHROOM4">
    <property type="organism name" value="human"/>
</dbReference>
<dbReference type="EvolutionaryTrace" id="Q9ULL8"/>
<dbReference type="GenomeRNAi" id="57477"/>
<dbReference type="Pharos" id="Q9ULL8">
    <property type="development level" value="Tbio"/>
</dbReference>
<dbReference type="PRO" id="PR:Q9ULL8"/>
<dbReference type="Proteomes" id="UP000005640">
    <property type="component" value="Chromosome X"/>
</dbReference>
<dbReference type="RNAct" id="Q9ULL8">
    <property type="molecule type" value="protein"/>
</dbReference>
<dbReference type="Bgee" id="ENSG00000158352">
    <property type="expression patterns" value="Expressed in buccal mucosa cell and 131 other cell types or tissues"/>
</dbReference>
<dbReference type="GO" id="GO:0005884">
    <property type="term" value="C:actin filament"/>
    <property type="evidence" value="ECO:0000314"/>
    <property type="project" value="UniProtKB"/>
</dbReference>
<dbReference type="GO" id="GO:0005912">
    <property type="term" value="C:adherens junction"/>
    <property type="evidence" value="ECO:0000318"/>
    <property type="project" value="GO_Central"/>
</dbReference>
<dbReference type="GO" id="GO:0043296">
    <property type="term" value="C:apical junction complex"/>
    <property type="evidence" value="ECO:0000318"/>
    <property type="project" value="GO_Central"/>
</dbReference>
<dbReference type="GO" id="GO:0016324">
    <property type="term" value="C:apical plasma membrane"/>
    <property type="evidence" value="ECO:0000250"/>
    <property type="project" value="UniProtKB"/>
</dbReference>
<dbReference type="GO" id="GO:0009925">
    <property type="term" value="C:basal plasma membrane"/>
    <property type="evidence" value="ECO:0000250"/>
    <property type="project" value="UniProtKB"/>
</dbReference>
<dbReference type="GO" id="GO:0030864">
    <property type="term" value="C:cortical actin cytoskeleton"/>
    <property type="evidence" value="ECO:0000318"/>
    <property type="project" value="GO_Central"/>
</dbReference>
<dbReference type="GO" id="GO:0005737">
    <property type="term" value="C:cytoplasm"/>
    <property type="evidence" value="ECO:0000250"/>
    <property type="project" value="UniProtKB"/>
</dbReference>
<dbReference type="GO" id="GO:0009898">
    <property type="term" value="C:cytoplasmic side of plasma membrane"/>
    <property type="evidence" value="ECO:0000314"/>
    <property type="project" value="UniProtKB"/>
</dbReference>
<dbReference type="GO" id="GO:0005925">
    <property type="term" value="C:focal adhesion"/>
    <property type="evidence" value="ECO:0000314"/>
    <property type="project" value="HPA"/>
</dbReference>
<dbReference type="GO" id="GO:0098982">
    <property type="term" value="C:GABA-ergic synapse"/>
    <property type="evidence" value="ECO:0007669"/>
    <property type="project" value="Ensembl"/>
</dbReference>
<dbReference type="GO" id="GO:0098978">
    <property type="term" value="C:glutamatergic synapse"/>
    <property type="evidence" value="ECO:0007669"/>
    <property type="project" value="Ensembl"/>
</dbReference>
<dbReference type="GO" id="GO:0043231">
    <property type="term" value="C:intracellular membrane-bounded organelle"/>
    <property type="evidence" value="ECO:0000314"/>
    <property type="project" value="HPA"/>
</dbReference>
<dbReference type="GO" id="GO:0005654">
    <property type="term" value="C:nucleoplasm"/>
    <property type="evidence" value="ECO:0000314"/>
    <property type="project" value="HPA"/>
</dbReference>
<dbReference type="GO" id="GO:0098794">
    <property type="term" value="C:postsynapse"/>
    <property type="evidence" value="ECO:0007669"/>
    <property type="project" value="Ensembl"/>
</dbReference>
<dbReference type="GO" id="GO:0098793">
    <property type="term" value="C:presynapse"/>
    <property type="evidence" value="ECO:0007669"/>
    <property type="project" value="Ensembl"/>
</dbReference>
<dbReference type="GO" id="GO:0001725">
    <property type="term" value="C:stress fiber"/>
    <property type="evidence" value="ECO:0007669"/>
    <property type="project" value="Ensembl"/>
</dbReference>
<dbReference type="GO" id="GO:0051015">
    <property type="term" value="F:actin filament binding"/>
    <property type="evidence" value="ECO:0000250"/>
    <property type="project" value="UniProtKB"/>
</dbReference>
<dbReference type="GO" id="GO:0045159">
    <property type="term" value="F:myosin II binding"/>
    <property type="evidence" value="ECO:0000250"/>
    <property type="project" value="UniProtKB"/>
</dbReference>
<dbReference type="GO" id="GO:0030036">
    <property type="term" value="P:actin cytoskeleton organization"/>
    <property type="evidence" value="ECO:0000303"/>
    <property type="project" value="UniProtKB"/>
</dbReference>
<dbReference type="GO" id="GO:0007015">
    <property type="term" value="P:actin filament organization"/>
    <property type="evidence" value="ECO:0000250"/>
    <property type="project" value="UniProtKB"/>
</dbReference>
<dbReference type="GO" id="GO:0007420">
    <property type="term" value="P:brain development"/>
    <property type="evidence" value="ECO:0000314"/>
    <property type="project" value="UniProtKB"/>
</dbReference>
<dbReference type="GO" id="GO:0050890">
    <property type="term" value="P:cognition"/>
    <property type="evidence" value="ECO:0000314"/>
    <property type="project" value="UniProtKB"/>
</dbReference>
<dbReference type="GO" id="GO:0099072">
    <property type="term" value="P:regulation of postsynaptic membrane neurotransmitter receptor levels"/>
    <property type="evidence" value="ECO:0007669"/>
    <property type="project" value="Ensembl"/>
</dbReference>
<dbReference type="CDD" id="cd06750">
    <property type="entry name" value="PDZ_shroom2_3_4-like"/>
    <property type="match status" value="1"/>
</dbReference>
<dbReference type="FunFam" id="2.30.42.10:FF:000100">
    <property type="entry name" value="Shroom family member 2"/>
    <property type="match status" value="1"/>
</dbReference>
<dbReference type="Gene3D" id="2.30.42.10">
    <property type="match status" value="1"/>
</dbReference>
<dbReference type="Gene3D" id="6.10.250.3120">
    <property type="match status" value="1"/>
</dbReference>
<dbReference type="InterPro" id="IPR014799">
    <property type="entry name" value="ASD2_dom"/>
</dbReference>
<dbReference type="InterPro" id="IPR001478">
    <property type="entry name" value="PDZ"/>
</dbReference>
<dbReference type="InterPro" id="IPR036034">
    <property type="entry name" value="PDZ_sf"/>
</dbReference>
<dbReference type="InterPro" id="IPR027685">
    <property type="entry name" value="Shroom_fam"/>
</dbReference>
<dbReference type="PANTHER" id="PTHR15012">
    <property type="entry name" value="APICAL PROTEIN/SHROOM-RELATED"/>
    <property type="match status" value="1"/>
</dbReference>
<dbReference type="PANTHER" id="PTHR15012:SF35">
    <property type="entry name" value="PROTEIN SHROOM4"/>
    <property type="match status" value="1"/>
</dbReference>
<dbReference type="Pfam" id="PF08687">
    <property type="entry name" value="ASD2"/>
    <property type="match status" value="1"/>
</dbReference>
<dbReference type="Pfam" id="PF00595">
    <property type="entry name" value="PDZ"/>
    <property type="match status" value="1"/>
</dbReference>
<dbReference type="SMART" id="SM00228">
    <property type="entry name" value="PDZ"/>
    <property type="match status" value="1"/>
</dbReference>
<dbReference type="SUPFAM" id="SSF50156">
    <property type="entry name" value="PDZ domain-like"/>
    <property type="match status" value="1"/>
</dbReference>
<dbReference type="PROSITE" id="PS51307">
    <property type="entry name" value="ASD2"/>
    <property type="match status" value="1"/>
</dbReference>
<dbReference type="PROSITE" id="PS50106">
    <property type="entry name" value="PDZ"/>
    <property type="match status" value="1"/>
</dbReference>